<accession>A4WVZ7</accession>
<gene>
    <name evidence="1" type="primary">secB</name>
    <name type="ordered locus">Rsph17025_2674</name>
</gene>
<feature type="chain" id="PRO_1000062509" description="Protein-export protein SecB">
    <location>
        <begin position="1"/>
        <end position="166"/>
    </location>
</feature>
<sequence length="166" mass="18707">MTDANGAPAEAAPQIRMQVLAQYVRDMSFENMVAQKGLQGGDVQPDIQVQVSLDARKRSVEHQYEVITKFKVTSKNKSGAAETLFLMELDYGGIFHVENVPEEQMHPFLLIECPRLLFPFVRRIISDVTRDGGFPPLNIDTVDFLALYRMELARRAEAQKAAQPVQ</sequence>
<dbReference type="EMBL" id="CP000661">
    <property type="protein sequence ID" value="ABP71561.1"/>
    <property type="molecule type" value="Genomic_DNA"/>
</dbReference>
<dbReference type="SMR" id="A4WVZ7"/>
<dbReference type="STRING" id="349102.Rsph17025_2674"/>
<dbReference type="KEGG" id="rsq:Rsph17025_2674"/>
<dbReference type="eggNOG" id="COG1952">
    <property type="taxonomic scope" value="Bacteria"/>
</dbReference>
<dbReference type="HOGENOM" id="CLU_111574_0_0_5"/>
<dbReference type="BioCyc" id="RSPH349102:G1G8M-2754-MONOMER"/>
<dbReference type="GO" id="GO:0005737">
    <property type="term" value="C:cytoplasm"/>
    <property type="evidence" value="ECO:0007669"/>
    <property type="project" value="UniProtKB-SubCell"/>
</dbReference>
<dbReference type="GO" id="GO:0051082">
    <property type="term" value="F:unfolded protein binding"/>
    <property type="evidence" value="ECO:0007669"/>
    <property type="project" value="InterPro"/>
</dbReference>
<dbReference type="GO" id="GO:0006457">
    <property type="term" value="P:protein folding"/>
    <property type="evidence" value="ECO:0007669"/>
    <property type="project" value="UniProtKB-UniRule"/>
</dbReference>
<dbReference type="GO" id="GO:0051262">
    <property type="term" value="P:protein tetramerization"/>
    <property type="evidence" value="ECO:0007669"/>
    <property type="project" value="InterPro"/>
</dbReference>
<dbReference type="GO" id="GO:0015031">
    <property type="term" value="P:protein transport"/>
    <property type="evidence" value="ECO:0007669"/>
    <property type="project" value="UniProtKB-UniRule"/>
</dbReference>
<dbReference type="Gene3D" id="3.10.420.10">
    <property type="entry name" value="SecB-like"/>
    <property type="match status" value="1"/>
</dbReference>
<dbReference type="HAMAP" id="MF_00821">
    <property type="entry name" value="SecB"/>
    <property type="match status" value="1"/>
</dbReference>
<dbReference type="InterPro" id="IPR003708">
    <property type="entry name" value="SecB"/>
</dbReference>
<dbReference type="InterPro" id="IPR035958">
    <property type="entry name" value="SecB-like_sf"/>
</dbReference>
<dbReference type="NCBIfam" id="NF004392">
    <property type="entry name" value="PRK05751.1-3"/>
    <property type="match status" value="1"/>
</dbReference>
<dbReference type="NCBIfam" id="TIGR00809">
    <property type="entry name" value="secB"/>
    <property type="match status" value="1"/>
</dbReference>
<dbReference type="PANTHER" id="PTHR36918">
    <property type="match status" value="1"/>
</dbReference>
<dbReference type="PANTHER" id="PTHR36918:SF1">
    <property type="entry name" value="PROTEIN-EXPORT PROTEIN SECB"/>
    <property type="match status" value="1"/>
</dbReference>
<dbReference type="Pfam" id="PF02556">
    <property type="entry name" value="SecB"/>
    <property type="match status" value="1"/>
</dbReference>
<dbReference type="PRINTS" id="PR01594">
    <property type="entry name" value="SECBCHAPRONE"/>
</dbReference>
<dbReference type="SUPFAM" id="SSF54611">
    <property type="entry name" value="SecB-like"/>
    <property type="match status" value="1"/>
</dbReference>
<reference key="1">
    <citation type="submission" date="2007-04" db="EMBL/GenBank/DDBJ databases">
        <title>Complete sequence of chromosome of Rhodobacter sphaeroides ATCC 17025.</title>
        <authorList>
            <consortium name="US DOE Joint Genome Institute"/>
            <person name="Copeland A."/>
            <person name="Lucas S."/>
            <person name="Lapidus A."/>
            <person name="Barry K."/>
            <person name="Detter J.C."/>
            <person name="Glavina del Rio T."/>
            <person name="Hammon N."/>
            <person name="Israni S."/>
            <person name="Dalin E."/>
            <person name="Tice H."/>
            <person name="Pitluck S."/>
            <person name="Chertkov O."/>
            <person name="Brettin T."/>
            <person name="Bruce D."/>
            <person name="Han C."/>
            <person name="Schmutz J."/>
            <person name="Larimer F."/>
            <person name="Land M."/>
            <person name="Hauser L."/>
            <person name="Kyrpides N."/>
            <person name="Kim E."/>
            <person name="Richardson P."/>
            <person name="Mackenzie C."/>
            <person name="Choudhary M."/>
            <person name="Donohue T.J."/>
            <person name="Kaplan S."/>
        </authorList>
    </citation>
    <scope>NUCLEOTIDE SEQUENCE [LARGE SCALE GENOMIC DNA]</scope>
    <source>
        <strain>ATCC 17025 / ATH 2.4.3</strain>
    </source>
</reference>
<proteinExistence type="inferred from homology"/>
<protein>
    <recommendedName>
        <fullName evidence="1">Protein-export protein SecB</fullName>
    </recommendedName>
</protein>
<organism>
    <name type="scientific">Cereibacter sphaeroides (strain ATCC 17025 / ATH 2.4.3)</name>
    <name type="common">Rhodobacter sphaeroides</name>
    <dbReference type="NCBI Taxonomy" id="349102"/>
    <lineage>
        <taxon>Bacteria</taxon>
        <taxon>Pseudomonadati</taxon>
        <taxon>Pseudomonadota</taxon>
        <taxon>Alphaproteobacteria</taxon>
        <taxon>Rhodobacterales</taxon>
        <taxon>Paracoccaceae</taxon>
        <taxon>Cereibacter</taxon>
    </lineage>
</organism>
<name>SECB_CERS5</name>
<evidence type="ECO:0000255" key="1">
    <source>
        <dbReference type="HAMAP-Rule" id="MF_00821"/>
    </source>
</evidence>
<comment type="function">
    <text evidence="1">One of the proteins required for the normal export of preproteins out of the cell cytoplasm. It is a molecular chaperone that binds to a subset of precursor proteins, maintaining them in a translocation-competent state. It also specifically binds to its receptor SecA.</text>
</comment>
<comment type="subunit">
    <text evidence="1">Homotetramer, a dimer of dimers. One homotetramer interacts with 1 SecA dimer.</text>
</comment>
<comment type="subcellular location">
    <subcellularLocation>
        <location evidence="1">Cytoplasm</location>
    </subcellularLocation>
</comment>
<comment type="similarity">
    <text evidence="1">Belongs to the SecB family.</text>
</comment>
<keyword id="KW-0143">Chaperone</keyword>
<keyword id="KW-0963">Cytoplasm</keyword>
<keyword id="KW-0653">Protein transport</keyword>
<keyword id="KW-0811">Translocation</keyword>
<keyword id="KW-0813">Transport</keyword>